<feature type="chain" id="PRO_1000123112" description="Glycerol-3-phosphate dehydrogenase [NAD(P)+]">
    <location>
        <begin position="1"/>
        <end position="344"/>
    </location>
</feature>
<feature type="active site" description="Proton acceptor" evidence="1">
    <location>
        <position position="188"/>
    </location>
</feature>
<feature type="binding site" evidence="1">
    <location>
        <position position="11"/>
    </location>
    <ligand>
        <name>NADPH</name>
        <dbReference type="ChEBI" id="CHEBI:57783"/>
    </ligand>
</feature>
<feature type="binding site" evidence="1">
    <location>
        <position position="31"/>
    </location>
    <ligand>
        <name>NADPH</name>
        <dbReference type="ChEBI" id="CHEBI:57783"/>
    </ligand>
</feature>
<feature type="binding site" evidence="1">
    <location>
        <position position="32"/>
    </location>
    <ligand>
        <name>NADPH</name>
        <dbReference type="ChEBI" id="CHEBI:57783"/>
    </ligand>
</feature>
<feature type="binding site" evidence="1">
    <location>
        <position position="105"/>
    </location>
    <ligand>
        <name>NADPH</name>
        <dbReference type="ChEBI" id="CHEBI:57783"/>
    </ligand>
</feature>
<feature type="binding site" evidence="1">
    <location>
        <position position="105"/>
    </location>
    <ligand>
        <name>sn-glycerol 3-phosphate</name>
        <dbReference type="ChEBI" id="CHEBI:57597"/>
    </ligand>
</feature>
<feature type="binding site" evidence="1">
    <location>
        <position position="133"/>
    </location>
    <ligand>
        <name>sn-glycerol 3-phosphate</name>
        <dbReference type="ChEBI" id="CHEBI:57597"/>
    </ligand>
</feature>
<feature type="binding site" evidence="1">
    <location>
        <position position="135"/>
    </location>
    <ligand>
        <name>sn-glycerol 3-phosphate</name>
        <dbReference type="ChEBI" id="CHEBI:57597"/>
    </ligand>
</feature>
<feature type="binding site" evidence="1">
    <location>
        <position position="137"/>
    </location>
    <ligand>
        <name>NADPH</name>
        <dbReference type="ChEBI" id="CHEBI:57783"/>
    </ligand>
</feature>
<feature type="binding site" evidence="1">
    <location>
        <position position="188"/>
    </location>
    <ligand>
        <name>sn-glycerol 3-phosphate</name>
        <dbReference type="ChEBI" id="CHEBI:57597"/>
    </ligand>
</feature>
<feature type="binding site" evidence="1">
    <location>
        <position position="241"/>
    </location>
    <ligand>
        <name>sn-glycerol 3-phosphate</name>
        <dbReference type="ChEBI" id="CHEBI:57597"/>
    </ligand>
</feature>
<feature type="binding site" evidence="1">
    <location>
        <position position="251"/>
    </location>
    <ligand>
        <name>sn-glycerol 3-phosphate</name>
        <dbReference type="ChEBI" id="CHEBI:57597"/>
    </ligand>
</feature>
<feature type="binding site" evidence="1">
    <location>
        <position position="252"/>
    </location>
    <ligand>
        <name>NADPH</name>
        <dbReference type="ChEBI" id="CHEBI:57783"/>
    </ligand>
</feature>
<feature type="binding site" evidence="1">
    <location>
        <position position="252"/>
    </location>
    <ligand>
        <name>sn-glycerol 3-phosphate</name>
        <dbReference type="ChEBI" id="CHEBI:57597"/>
    </ligand>
</feature>
<feature type="binding site" evidence="1">
    <location>
        <position position="253"/>
    </location>
    <ligand>
        <name>sn-glycerol 3-phosphate</name>
        <dbReference type="ChEBI" id="CHEBI:57597"/>
    </ligand>
</feature>
<feature type="binding site" evidence="1">
    <location>
        <position position="278"/>
    </location>
    <ligand>
        <name>NADPH</name>
        <dbReference type="ChEBI" id="CHEBI:57783"/>
    </ligand>
</feature>
<organism>
    <name type="scientific">Acidithiobacillus ferrooxidans (strain ATCC 53993 / BNL-5-31)</name>
    <name type="common">Leptospirillum ferrooxidans (ATCC 53993)</name>
    <dbReference type="NCBI Taxonomy" id="380394"/>
    <lineage>
        <taxon>Bacteria</taxon>
        <taxon>Pseudomonadati</taxon>
        <taxon>Pseudomonadota</taxon>
        <taxon>Acidithiobacillia</taxon>
        <taxon>Acidithiobacillales</taxon>
        <taxon>Acidithiobacillaceae</taxon>
        <taxon>Acidithiobacillus</taxon>
    </lineage>
</organism>
<keyword id="KW-0963">Cytoplasm</keyword>
<keyword id="KW-0444">Lipid biosynthesis</keyword>
<keyword id="KW-0443">Lipid metabolism</keyword>
<keyword id="KW-0520">NAD</keyword>
<keyword id="KW-0521">NADP</keyword>
<keyword id="KW-0547">Nucleotide-binding</keyword>
<keyword id="KW-0560">Oxidoreductase</keyword>
<keyword id="KW-0594">Phospholipid biosynthesis</keyword>
<keyword id="KW-1208">Phospholipid metabolism</keyword>
<protein>
    <recommendedName>
        <fullName evidence="1">Glycerol-3-phosphate dehydrogenase [NAD(P)+]</fullName>
        <ecNumber evidence="1">1.1.1.94</ecNumber>
    </recommendedName>
    <alternativeName>
        <fullName evidence="1">NAD(P)(+)-dependent glycerol-3-phosphate dehydrogenase</fullName>
    </alternativeName>
    <alternativeName>
        <fullName evidence="1">NAD(P)H-dependent dihydroxyacetone-phosphate reductase</fullName>
    </alternativeName>
</protein>
<dbReference type="EC" id="1.1.1.94" evidence="1"/>
<dbReference type="EMBL" id="CP001132">
    <property type="protein sequence ID" value="ACH84006.1"/>
    <property type="molecule type" value="Genomic_DNA"/>
</dbReference>
<dbReference type="RefSeq" id="WP_012536992.1">
    <property type="nucleotide sequence ID" value="NC_011206.1"/>
</dbReference>
<dbReference type="SMR" id="B5EKH1"/>
<dbReference type="KEGG" id="afe:Lferr_1785"/>
<dbReference type="eggNOG" id="COG0240">
    <property type="taxonomic scope" value="Bacteria"/>
</dbReference>
<dbReference type="HOGENOM" id="CLU_033449_0_2_6"/>
<dbReference type="UniPathway" id="UPA00940"/>
<dbReference type="GO" id="GO:0005829">
    <property type="term" value="C:cytosol"/>
    <property type="evidence" value="ECO:0007669"/>
    <property type="project" value="TreeGrafter"/>
</dbReference>
<dbReference type="GO" id="GO:0047952">
    <property type="term" value="F:glycerol-3-phosphate dehydrogenase [NAD(P)+] activity"/>
    <property type="evidence" value="ECO:0007669"/>
    <property type="project" value="UniProtKB-UniRule"/>
</dbReference>
<dbReference type="GO" id="GO:0051287">
    <property type="term" value="F:NAD binding"/>
    <property type="evidence" value="ECO:0007669"/>
    <property type="project" value="InterPro"/>
</dbReference>
<dbReference type="GO" id="GO:0005975">
    <property type="term" value="P:carbohydrate metabolic process"/>
    <property type="evidence" value="ECO:0007669"/>
    <property type="project" value="InterPro"/>
</dbReference>
<dbReference type="GO" id="GO:0046167">
    <property type="term" value="P:glycerol-3-phosphate biosynthetic process"/>
    <property type="evidence" value="ECO:0007669"/>
    <property type="project" value="UniProtKB-UniRule"/>
</dbReference>
<dbReference type="GO" id="GO:0046168">
    <property type="term" value="P:glycerol-3-phosphate catabolic process"/>
    <property type="evidence" value="ECO:0007669"/>
    <property type="project" value="InterPro"/>
</dbReference>
<dbReference type="GO" id="GO:0006650">
    <property type="term" value="P:glycerophospholipid metabolic process"/>
    <property type="evidence" value="ECO:0007669"/>
    <property type="project" value="UniProtKB-UniRule"/>
</dbReference>
<dbReference type="GO" id="GO:0008654">
    <property type="term" value="P:phospholipid biosynthetic process"/>
    <property type="evidence" value="ECO:0007669"/>
    <property type="project" value="UniProtKB-KW"/>
</dbReference>
<dbReference type="FunFam" id="1.10.1040.10:FF:000001">
    <property type="entry name" value="Glycerol-3-phosphate dehydrogenase [NAD(P)+]"/>
    <property type="match status" value="1"/>
</dbReference>
<dbReference type="Gene3D" id="1.10.1040.10">
    <property type="entry name" value="N-(1-d-carboxylethyl)-l-norvaline Dehydrogenase, domain 2"/>
    <property type="match status" value="1"/>
</dbReference>
<dbReference type="Gene3D" id="3.40.50.720">
    <property type="entry name" value="NAD(P)-binding Rossmann-like Domain"/>
    <property type="match status" value="1"/>
</dbReference>
<dbReference type="HAMAP" id="MF_00394">
    <property type="entry name" value="NAD_Glyc3P_dehydrog"/>
    <property type="match status" value="1"/>
</dbReference>
<dbReference type="InterPro" id="IPR008927">
    <property type="entry name" value="6-PGluconate_DH-like_C_sf"/>
</dbReference>
<dbReference type="InterPro" id="IPR013328">
    <property type="entry name" value="6PGD_dom2"/>
</dbReference>
<dbReference type="InterPro" id="IPR006168">
    <property type="entry name" value="G3P_DH_NAD-dep"/>
</dbReference>
<dbReference type="InterPro" id="IPR006109">
    <property type="entry name" value="G3P_DH_NAD-dep_C"/>
</dbReference>
<dbReference type="InterPro" id="IPR011128">
    <property type="entry name" value="G3P_DH_NAD-dep_N"/>
</dbReference>
<dbReference type="InterPro" id="IPR036291">
    <property type="entry name" value="NAD(P)-bd_dom_sf"/>
</dbReference>
<dbReference type="NCBIfam" id="NF000940">
    <property type="entry name" value="PRK00094.1-2"/>
    <property type="match status" value="1"/>
</dbReference>
<dbReference type="NCBIfam" id="NF000942">
    <property type="entry name" value="PRK00094.1-4"/>
    <property type="match status" value="1"/>
</dbReference>
<dbReference type="PANTHER" id="PTHR11728">
    <property type="entry name" value="GLYCEROL-3-PHOSPHATE DEHYDROGENASE"/>
    <property type="match status" value="1"/>
</dbReference>
<dbReference type="PANTHER" id="PTHR11728:SF1">
    <property type="entry name" value="GLYCEROL-3-PHOSPHATE DEHYDROGENASE [NAD(+)] 2, CHLOROPLASTIC"/>
    <property type="match status" value="1"/>
</dbReference>
<dbReference type="Pfam" id="PF07479">
    <property type="entry name" value="NAD_Gly3P_dh_C"/>
    <property type="match status" value="1"/>
</dbReference>
<dbReference type="Pfam" id="PF01210">
    <property type="entry name" value="NAD_Gly3P_dh_N"/>
    <property type="match status" value="1"/>
</dbReference>
<dbReference type="PIRSF" id="PIRSF000114">
    <property type="entry name" value="Glycerol-3-P_dh"/>
    <property type="match status" value="1"/>
</dbReference>
<dbReference type="PRINTS" id="PR00077">
    <property type="entry name" value="GPDHDRGNASE"/>
</dbReference>
<dbReference type="SUPFAM" id="SSF48179">
    <property type="entry name" value="6-phosphogluconate dehydrogenase C-terminal domain-like"/>
    <property type="match status" value="1"/>
</dbReference>
<dbReference type="SUPFAM" id="SSF51735">
    <property type="entry name" value="NAD(P)-binding Rossmann-fold domains"/>
    <property type="match status" value="1"/>
</dbReference>
<comment type="function">
    <text evidence="1">Catalyzes the reduction of the glycolytic intermediate dihydroxyacetone phosphate (DHAP) to sn-glycerol 3-phosphate (G3P), the key precursor for phospholipid synthesis.</text>
</comment>
<comment type="catalytic activity">
    <reaction evidence="1">
        <text>sn-glycerol 3-phosphate + NAD(+) = dihydroxyacetone phosphate + NADH + H(+)</text>
        <dbReference type="Rhea" id="RHEA:11092"/>
        <dbReference type="ChEBI" id="CHEBI:15378"/>
        <dbReference type="ChEBI" id="CHEBI:57540"/>
        <dbReference type="ChEBI" id="CHEBI:57597"/>
        <dbReference type="ChEBI" id="CHEBI:57642"/>
        <dbReference type="ChEBI" id="CHEBI:57945"/>
        <dbReference type="EC" id="1.1.1.94"/>
    </reaction>
    <physiologicalReaction direction="right-to-left" evidence="1">
        <dbReference type="Rhea" id="RHEA:11094"/>
    </physiologicalReaction>
</comment>
<comment type="catalytic activity">
    <reaction evidence="1">
        <text>sn-glycerol 3-phosphate + NADP(+) = dihydroxyacetone phosphate + NADPH + H(+)</text>
        <dbReference type="Rhea" id="RHEA:11096"/>
        <dbReference type="ChEBI" id="CHEBI:15378"/>
        <dbReference type="ChEBI" id="CHEBI:57597"/>
        <dbReference type="ChEBI" id="CHEBI:57642"/>
        <dbReference type="ChEBI" id="CHEBI:57783"/>
        <dbReference type="ChEBI" id="CHEBI:58349"/>
        <dbReference type="EC" id="1.1.1.94"/>
    </reaction>
    <physiologicalReaction direction="right-to-left" evidence="1">
        <dbReference type="Rhea" id="RHEA:11098"/>
    </physiologicalReaction>
</comment>
<comment type="pathway">
    <text evidence="1">Membrane lipid metabolism; glycerophospholipid metabolism.</text>
</comment>
<comment type="subcellular location">
    <subcellularLocation>
        <location evidence="1">Cytoplasm</location>
    </subcellularLocation>
</comment>
<comment type="similarity">
    <text evidence="1">Belongs to the NAD-dependent glycerol-3-phosphate dehydrogenase family.</text>
</comment>
<name>GPDA_ACIF5</name>
<accession>B5EKH1</accession>
<sequence length="344" mass="36082">MRWAVLGGGHWGTALAVYLLRQRHMVQLWGRRAERLPCQPGRTDLFPVFPECARPEGLHCTVDLAAAVQGGEGIVLAVPSHALRGLLTHLLPCLPSTALFVLASKGLEVPSALRLDQVLREILPEAPLVVLSGPSFAHDLMLGKPLAMTAASTDPTYAQRVAEAFGSAQMRVYTSDDVAGVCLGGAIKNVLAIAAGISDGLGNGDSARAALITRGMAELHRLGTALGGRTETFMGLAGAGDLILTSCSDLSRNRRVGLGLGSGLSLEAVLRGIGEEAEGVRTAQALFQLAQSLGVDMPITEQVYRVLFEGAAPRAASDELMRRALRSELHVSDDGTPGGAARTE</sequence>
<proteinExistence type="inferred from homology"/>
<gene>
    <name evidence="1" type="primary">gpsA</name>
    <name type="ordered locus">Lferr_1785</name>
</gene>
<reference key="1">
    <citation type="submission" date="2008-08" db="EMBL/GenBank/DDBJ databases">
        <title>Complete sequence of Acidithiobacillus ferrooxidans ATCC 53993.</title>
        <authorList>
            <person name="Lucas S."/>
            <person name="Copeland A."/>
            <person name="Lapidus A."/>
            <person name="Glavina del Rio T."/>
            <person name="Dalin E."/>
            <person name="Tice H."/>
            <person name="Bruce D."/>
            <person name="Goodwin L."/>
            <person name="Pitluck S."/>
            <person name="Sims D."/>
            <person name="Brettin T."/>
            <person name="Detter J.C."/>
            <person name="Han C."/>
            <person name="Kuske C.R."/>
            <person name="Larimer F."/>
            <person name="Land M."/>
            <person name="Hauser L."/>
            <person name="Kyrpides N."/>
            <person name="Lykidis A."/>
            <person name="Borole A.P."/>
        </authorList>
    </citation>
    <scope>NUCLEOTIDE SEQUENCE [LARGE SCALE GENOMIC DNA]</scope>
    <source>
        <strain>ATCC 53993 / BNL-5-31</strain>
    </source>
</reference>
<evidence type="ECO:0000255" key="1">
    <source>
        <dbReference type="HAMAP-Rule" id="MF_00394"/>
    </source>
</evidence>